<sequence>MSYYQHPLDVTGLPSWKALEEHRLAMQHFSMREAFKADPTRFDDLSVSCSGLFLDYSKNLITPETRTLLVNLAREAGVEQAARAMFEGERINASENRPVLHTALRRPMGDSVMVDGKNIMRDVHTALAQMTDIVTRIHNNLWRGFSDKTITDVVNIGIGGSFLGPQLVSEALLPFTQHGVRTHYLANIDGSEFREVTAKLNVETTLFIISSKTFGTLETLKNAQAARNWYLGKGGTEEKLYRHFIAVTSNKQAAVDFGIREKNIFPMWDWVGGRYSLWSAIGLPIALAIGMSNFKDLLSGAYSMDQHFLSEPFESNMPVLLAMLGIWYHNFWGAQSYAFLPYDHYLRNFVKHLQQMDMESNGKSVRQDGTPVSCSTGPVIWGGVGANGQHAYHQLLHQGTPLIPADFIVPVVSHNPVADHHEWLYANCLSQSQALMLGKTREEAEAELRAKGLSEAEVQRLAPHKVIPGNRPSNTLVMETISPGRLGALIALYEHKVFVQGVIWGINSFDQWGVELGKELGKAVYNQMTRFDAAPAEDASTQGLIDFFRGRHRG</sequence>
<dbReference type="EC" id="5.3.1.9" evidence="1"/>
<dbReference type="EMBL" id="CP000304">
    <property type="protein sequence ID" value="ABP80930.1"/>
    <property type="molecule type" value="Genomic_DNA"/>
</dbReference>
<dbReference type="RefSeq" id="WP_011914361.1">
    <property type="nucleotide sequence ID" value="NC_009434.1"/>
</dbReference>
<dbReference type="SMR" id="A4VPM9"/>
<dbReference type="KEGG" id="psa:PST_3299"/>
<dbReference type="eggNOG" id="COG0166">
    <property type="taxonomic scope" value="Bacteria"/>
</dbReference>
<dbReference type="HOGENOM" id="CLU_017947_3_1_6"/>
<dbReference type="UniPathway" id="UPA00109">
    <property type="reaction ID" value="UER00181"/>
</dbReference>
<dbReference type="UniPathway" id="UPA00138"/>
<dbReference type="Proteomes" id="UP000000233">
    <property type="component" value="Chromosome"/>
</dbReference>
<dbReference type="GO" id="GO:0005829">
    <property type="term" value="C:cytosol"/>
    <property type="evidence" value="ECO:0007669"/>
    <property type="project" value="TreeGrafter"/>
</dbReference>
<dbReference type="GO" id="GO:0097367">
    <property type="term" value="F:carbohydrate derivative binding"/>
    <property type="evidence" value="ECO:0007669"/>
    <property type="project" value="InterPro"/>
</dbReference>
<dbReference type="GO" id="GO:0004347">
    <property type="term" value="F:glucose-6-phosphate isomerase activity"/>
    <property type="evidence" value="ECO:0007669"/>
    <property type="project" value="UniProtKB-UniRule"/>
</dbReference>
<dbReference type="GO" id="GO:0048029">
    <property type="term" value="F:monosaccharide binding"/>
    <property type="evidence" value="ECO:0007669"/>
    <property type="project" value="TreeGrafter"/>
</dbReference>
<dbReference type="GO" id="GO:0006094">
    <property type="term" value="P:gluconeogenesis"/>
    <property type="evidence" value="ECO:0007669"/>
    <property type="project" value="UniProtKB-UniRule"/>
</dbReference>
<dbReference type="GO" id="GO:0051156">
    <property type="term" value="P:glucose 6-phosphate metabolic process"/>
    <property type="evidence" value="ECO:0007669"/>
    <property type="project" value="TreeGrafter"/>
</dbReference>
<dbReference type="GO" id="GO:0006096">
    <property type="term" value="P:glycolytic process"/>
    <property type="evidence" value="ECO:0007669"/>
    <property type="project" value="UniProtKB-UniRule"/>
</dbReference>
<dbReference type="CDD" id="cd05015">
    <property type="entry name" value="SIS_PGI_1"/>
    <property type="match status" value="1"/>
</dbReference>
<dbReference type="CDD" id="cd05016">
    <property type="entry name" value="SIS_PGI_2"/>
    <property type="match status" value="1"/>
</dbReference>
<dbReference type="Gene3D" id="1.10.1390.10">
    <property type="match status" value="1"/>
</dbReference>
<dbReference type="Gene3D" id="3.40.50.10490">
    <property type="entry name" value="Glucose-6-phosphate isomerase like protein, domain 1"/>
    <property type="match status" value="2"/>
</dbReference>
<dbReference type="HAMAP" id="MF_00473">
    <property type="entry name" value="G6P_isomerase"/>
    <property type="match status" value="1"/>
</dbReference>
<dbReference type="InterPro" id="IPR001672">
    <property type="entry name" value="G6P_Isomerase"/>
</dbReference>
<dbReference type="InterPro" id="IPR023096">
    <property type="entry name" value="G6P_Isomerase_C"/>
</dbReference>
<dbReference type="InterPro" id="IPR018189">
    <property type="entry name" value="Phosphoglucose_isomerase_CS"/>
</dbReference>
<dbReference type="InterPro" id="IPR046348">
    <property type="entry name" value="SIS_dom_sf"/>
</dbReference>
<dbReference type="InterPro" id="IPR035476">
    <property type="entry name" value="SIS_PGI_1"/>
</dbReference>
<dbReference type="InterPro" id="IPR035482">
    <property type="entry name" value="SIS_PGI_2"/>
</dbReference>
<dbReference type="NCBIfam" id="NF001211">
    <property type="entry name" value="PRK00179.1"/>
    <property type="match status" value="1"/>
</dbReference>
<dbReference type="PANTHER" id="PTHR11469">
    <property type="entry name" value="GLUCOSE-6-PHOSPHATE ISOMERASE"/>
    <property type="match status" value="1"/>
</dbReference>
<dbReference type="PANTHER" id="PTHR11469:SF1">
    <property type="entry name" value="GLUCOSE-6-PHOSPHATE ISOMERASE"/>
    <property type="match status" value="1"/>
</dbReference>
<dbReference type="Pfam" id="PF00342">
    <property type="entry name" value="PGI"/>
    <property type="match status" value="1"/>
</dbReference>
<dbReference type="PRINTS" id="PR00662">
    <property type="entry name" value="G6PISOMERASE"/>
</dbReference>
<dbReference type="SUPFAM" id="SSF53697">
    <property type="entry name" value="SIS domain"/>
    <property type="match status" value="1"/>
</dbReference>
<dbReference type="PROSITE" id="PS00765">
    <property type="entry name" value="P_GLUCOSE_ISOMERASE_1"/>
    <property type="match status" value="1"/>
</dbReference>
<dbReference type="PROSITE" id="PS00174">
    <property type="entry name" value="P_GLUCOSE_ISOMERASE_2"/>
    <property type="match status" value="1"/>
</dbReference>
<dbReference type="PROSITE" id="PS51463">
    <property type="entry name" value="P_GLUCOSE_ISOMERASE_3"/>
    <property type="match status" value="1"/>
</dbReference>
<protein>
    <recommendedName>
        <fullName evidence="1">Glucose-6-phosphate isomerase</fullName>
        <shortName evidence="1">GPI</shortName>
        <ecNumber evidence="1">5.3.1.9</ecNumber>
    </recommendedName>
    <alternativeName>
        <fullName evidence="1">Phosphoglucose isomerase</fullName>
        <shortName evidence="1">PGI</shortName>
    </alternativeName>
    <alternativeName>
        <fullName evidence="1">Phosphohexose isomerase</fullName>
        <shortName evidence="1">PHI</shortName>
    </alternativeName>
</protein>
<name>G6PI_STUS1</name>
<gene>
    <name evidence="1" type="primary">pgi</name>
    <name type="ordered locus">PST_3299</name>
</gene>
<reference key="1">
    <citation type="journal article" date="2008" name="Proc. Natl. Acad. Sci. U.S.A.">
        <title>Nitrogen fixation island and rhizosphere competence traits in the genome of root-associated Pseudomonas stutzeri A1501.</title>
        <authorList>
            <person name="Yan Y."/>
            <person name="Yang J."/>
            <person name="Dou Y."/>
            <person name="Chen M."/>
            <person name="Ping S."/>
            <person name="Peng J."/>
            <person name="Lu W."/>
            <person name="Zhang W."/>
            <person name="Yao Z."/>
            <person name="Li H."/>
            <person name="Liu W."/>
            <person name="He S."/>
            <person name="Geng L."/>
            <person name="Zhang X."/>
            <person name="Yang F."/>
            <person name="Yu H."/>
            <person name="Zhan Y."/>
            <person name="Li D."/>
            <person name="Lin Z."/>
            <person name="Wang Y."/>
            <person name="Elmerich C."/>
            <person name="Lin M."/>
            <person name="Jin Q."/>
        </authorList>
    </citation>
    <scope>NUCLEOTIDE SEQUENCE [LARGE SCALE GENOMIC DNA]</scope>
    <source>
        <strain>A1501</strain>
    </source>
</reference>
<feature type="chain" id="PRO_1000014006" description="Glucose-6-phosphate isomerase">
    <location>
        <begin position="1"/>
        <end position="554"/>
    </location>
</feature>
<feature type="active site" description="Proton donor" evidence="1">
    <location>
        <position position="359"/>
    </location>
</feature>
<feature type="active site" evidence="1">
    <location>
        <position position="390"/>
    </location>
</feature>
<feature type="active site" evidence="1">
    <location>
        <position position="518"/>
    </location>
</feature>
<accession>A4VPM9</accession>
<proteinExistence type="inferred from homology"/>
<keyword id="KW-0963">Cytoplasm</keyword>
<keyword id="KW-0312">Gluconeogenesis</keyword>
<keyword id="KW-0324">Glycolysis</keyword>
<keyword id="KW-0413">Isomerase</keyword>
<keyword id="KW-1185">Reference proteome</keyword>
<comment type="function">
    <text evidence="1">Catalyzes the reversible isomerization of glucose-6-phosphate to fructose-6-phosphate.</text>
</comment>
<comment type="catalytic activity">
    <reaction evidence="1">
        <text>alpha-D-glucose 6-phosphate = beta-D-fructose 6-phosphate</text>
        <dbReference type="Rhea" id="RHEA:11816"/>
        <dbReference type="ChEBI" id="CHEBI:57634"/>
        <dbReference type="ChEBI" id="CHEBI:58225"/>
        <dbReference type="EC" id="5.3.1.9"/>
    </reaction>
</comment>
<comment type="pathway">
    <text evidence="1">Carbohydrate biosynthesis; gluconeogenesis.</text>
</comment>
<comment type="pathway">
    <text evidence="1">Carbohydrate degradation; glycolysis; D-glyceraldehyde 3-phosphate and glycerone phosphate from D-glucose: step 2/4.</text>
</comment>
<comment type="subcellular location">
    <subcellularLocation>
        <location evidence="1">Cytoplasm</location>
    </subcellularLocation>
</comment>
<comment type="similarity">
    <text evidence="1">Belongs to the GPI family.</text>
</comment>
<evidence type="ECO:0000255" key="1">
    <source>
        <dbReference type="HAMAP-Rule" id="MF_00473"/>
    </source>
</evidence>
<organism>
    <name type="scientific">Stutzerimonas stutzeri (strain A1501)</name>
    <name type="common">Pseudomonas stutzeri</name>
    <dbReference type="NCBI Taxonomy" id="379731"/>
    <lineage>
        <taxon>Bacteria</taxon>
        <taxon>Pseudomonadati</taxon>
        <taxon>Pseudomonadota</taxon>
        <taxon>Gammaproteobacteria</taxon>
        <taxon>Pseudomonadales</taxon>
        <taxon>Pseudomonadaceae</taxon>
        <taxon>Stutzerimonas</taxon>
    </lineage>
</organism>